<keyword id="KW-0067">ATP-binding</keyword>
<keyword id="KW-0997">Cell inner membrane</keyword>
<keyword id="KW-1003">Cell membrane</keyword>
<keyword id="KW-0472">Membrane</keyword>
<keyword id="KW-0547">Nucleotide-binding</keyword>
<keyword id="KW-1185">Reference proteome</keyword>
<keyword id="KW-1278">Translocase</keyword>
<keyword id="KW-0813">Transport</keyword>
<sequence>MGQSKKLNKQPSSLSPLVQLAGIRKCFDGKEVISQLDLTINNGEFLTLLGPSGCGKTTVLRLIAGLETVDSGRIMLDNEDITHVPAENRYVNTVFQSYALFPHMTVFENVAFGLRMQKTPAAEITPRVMEALRMVQLETFAQRKPHQLSGGQQQRVAIARAVVNKPRLLLLDESLSALDYKLRKQMQNELKALQRKLGITFVFVTHDQEEALTMSDRIVVMRDGRIEQDGTPREIYEEPKNLFVAGFIGEINMFNATVIERLDEQRVRANVEGRECNIYVNFAVEPGQKLHVLLRPEDLRVEEINDDNHAEGLIGYVRERNYKGMTLESVVELENGKMVMVSEFFNEDDPDFDHSLDQKMAINWVESWEVVLADEEHK</sequence>
<comment type="function">
    <text evidence="1">Part of the ABC transporter complex PotABCD involved in spermidine/putrescine import. Responsible for energy coupling to the transport system.</text>
</comment>
<comment type="catalytic activity">
    <reaction evidence="1">
        <text>ATP + H2O + polyamine-[polyamine-binding protein]Side 1 = ADP + phosphate + polyamineSide 2 + [polyamine-binding protein]Side 1.</text>
        <dbReference type="EC" id="7.6.2.11"/>
    </reaction>
</comment>
<comment type="subunit">
    <text evidence="1">The complex is composed of two ATP-binding proteins (PotA), two transmembrane proteins (PotB and PotC) and a solute-binding protein (PotD).</text>
</comment>
<comment type="subcellular location">
    <subcellularLocation>
        <location evidence="1">Cell inner membrane</location>
        <topology evidence="1">Peripheral membrane protein</topology>
    </subcellularLocation>
</comment>
<comment type="similarity">
    <text evidence="1">Belongs to the ABC transporter superfamily. Spermidine/putrescine importer (TC 3.A.1.11.1) family.</text>
</comment>
<organism>
    <name type="scientific">Shigella dysenteriae serotype 1 (strain Sd197)</name>
    <dbReference type="NCBI Taxonomy" id="300267"/>
    <lineage>
        <taxon>Bacteria</taxon>
        <taxon>Pseudomonadati</taxon>
        <taxon>Pseudomonadota</taxon>
        <taxon>Gammaproteobacteria</taxon>
        <taxon>Enterobacterales</taxon>
        <taxon>Enterobacteriaceae</taxon>
        <taxon>Shigella</taxon>
    </lineage>
</organism>
<name>POTA_SHIDS</name>
<dbReference type="EC" id="7.6.2.11" evidence="1"/>
<dbReference type="EMBL" id="CP000034">
    <property type="protein sequence ID" value="ABB62121.1"/>
    <property type="molecule type" value="Genomic_DNA"/>
</dbReference>
<dbReference type="RefSeq" id="WP_000531604.1">
    <property type="nucleotide sequence ID" value="NC_007606.1"/>
</dbReference>
<dbReference type="RefSeq" id="YP_403612.1">
    <property type="nucleotide sequence ID" value="NC_007606.1"/>
</dbReference>
<dbReference type="SMR" id="Q32EY4"/>
<dbReference type="STRING" id="300267.SDY_2026"/>
<dbReference type="EnsemblBacteria" id="ABB62121">
    <property type="protein sequence ID" value="ABB62121"/>
    <property type="gene ID" value="SDY_2026"/>
</dbReference>
<dbReference type="KEGG" id="sdy:SDY_2026"/>
<dbReference type="PATRIC" id="fig|300267.13.peg.2439"/>
<dbReference type="HOGENOM" id="CLU_000604_1_1_6"/>
<dbReference type="Proteomes" id="UP000002716">
    <property type="component" value="Chromosome"/>
</dbReference>
<dbReference type="GO" id="GO:0043190">
    <property type="term" value="C:ATP-binding cassette (ABC) transporter complex"/>
    <property type="evidence" value="ECO:0007669"/>
    <property type="project" value="InterPro"/>
</dbReference>
<dbReference type="GO" id="GO:0015594">
    <property type="term" value="F:ABC-type putrescine transporter activity"/>
    <property type="evidence" value="ECO:0007669"/>
    <property type="project" value="InterPro"/>
</dbReference>
<dbReference type="GO" id="GO:0005524">
    <property type="term" value="F:ATP binding"/>
    <property type="evidence" value="ECO:0007669"/>
    <property type="project" value="UniProtKB-KW"/>
</dbReference>
<dbReference type="GO" id="GO:0016887">
    <property type="term" value="F:ATP hydrolysis activity"/>
    <property type="evidence" value="ECO:0007669"/>
    <property type="project" value="InterPro"/>
</dbReference>
<dbReference type="CDD" id="cd03300">
    <property type="entry name" value="ABC_PotA_N"/>
    <property type="match status" value="1"/>
</dbReference>
<dbReference type="FunFam" id="2.40.50.100:FF:000017">
    <property type="entry name" value="Spermidine/putrescine import ATP-binding protein PotA"/>
    <property type="match status" value="1"/>
</dbReference>
<dbReference type="FunFam" id="3.40.50.300:FF:000133">
    <property type="entry name" value="Spermidine/putrescine import ATP-binding protein PotA"/>
    <property type="match status" value="1"/>
</dbReference>
<dbReference type="Gene3D" id="2.40.50.100">
    <property type="match status" value="1"/>
</dbReference>
<dbReference type="Gene3D" id="3.40.50.300">
    <property type="entry name" value="P-loop containing nucleotide triphosphate hydrolases"/>
    <property type="match status" value="1"/>
</dbReference>
<dbReference type="InterPro" id="IPR003593">
    <property type="entry name" value="AAA+_ATPase"/>
</dbReference>
<dbReference type="InterPro" id="IPR050093">
    <property type="entry name" value="ABC_SmlMolc_Importer"/>
</dbReference>
<dbReference type="InterPro" id="IPR003439">
    <property type="entry name" value="ABC_transporter-like_ATP-bd"/>
</dbReference>
<dbReference type="InterPro" id="IPR017871">
    <property type="entry name" value="ABC_transporter-like_CS"/>
</dbReference>
<dbReference type="InterPro" id="IPR008995">
    <property type="entry name" value="Mo/tungstate-bd_C_term_dom"/>
</dbReference>
<dbReference type="InterPro" id="IPR027417">
    <property type="entry name" value="P-loop_NTPase"/>
</dbReference>
<dbReference type="InterPro" id="IPR005893">
    <property type="entry name" value="PotA-like"/>
</dbReference>
<dbReference type="InterPro" id="IPR017879">
    <property type="entry name" value="PotA_ATP-bd"/>
</dbReference>
<dbReference type="InterPro" id="IPR013611">
    <property type="entry name" value="Transp-assoc_OB_typ2"/>
</dbReference>
<dbReference type="NCBIfam" id="TIGR01187">
    <property type="entry name" value="potA"/>
    <property type="match status" value="1"/>
</dbReference>
<dbReference type="NCBIfam" id="NF006987">
    <property type="entry name" value="PRK09452.1"/>
    <property type="match status" value="1"/>
</dbReference>
<dbReference type="PANTHER" id="PTHR42781">
    <property type="entry name" value="SPERMIDINE/PUTRESCINE IMPORT ATP-BINDING PROTEIN POTA"/>
    <property type="match status" value="1"/>
</dbReference>
<dbReference type="PANTHER" id="PTHR42781:SF4">
    <property type="entry name" value="SPERMIDINE_PUTRESCINE IMPORT ATP-BINDING PROTEIN POTA"/>
    <property type="match status" value="1"/>
</dbReference>
<dbReference type="Pfam" id="PF00005">
    <property type="entry name" value="ABC_tran"/>
    <property type="match status" value="1"/>
</dbReference>
<dbReference type="Pfam" id="PF08402">
    <property type="entry name" value="TOBE_2"/>
    <property type="match status" value="1"/>
</dbReference>
<dbReference type="SMART" id="SM00382">
    <property type="entry name" value="AAA"/>
    <property type="match status" value="1"/>
</dbReference>
<dbReference type="SUPFAM" id="SSF50331">
    <property type="entry name" value="MOP-like"/>
    <property type="match status" value="1"/>
</dbReference>
<dbReference type="SUPFAM" id="SSF52540">
    <property type="entry name" value="P-loop containing nucleoside triphosphate hydrolases"/>
    <property type="match status" value="1"/>
</dbReference>
<dbReference type="PROSITE" id="PS00211">
    <property type="entry name" value="ABC_TRANSPORTER_1"/>
    <property type="match status" value="1"/>
</dbReference>
<dbReference type="PROSITE" id="PS50893">
    <property type="entry name" value="ABC_TRANSPORTER_2"/>
    <property type="match status" value="1"/>
</dbReference>
<dbReference type="PROSITE" id="PS51305">
    <property type="entry name" value="POTA"/>
    <property type="match status" value="1"/>
</dbReference>
<evidence type="ECO:0000255" key="1">
    <source>
        <dbReference type="HAMAP-Rule" id="MF_01726"/>
    </source>
</evidence>
<feature type="chain" id="PRO_0000286285" description="Spermidine/putrescine import ATP-binding protein PotA">
    <location>
        <begin position="1"/>
        <end position="378"/>
    </location>
</feature>
<feature type="domain" description="ABC transporter" evidence="1">
    <location>
        <begin position="18"/>
        <end position="248"/>
    </location>
</feature>
<feature type="binding site" evidence="1">
    <location>
        <begin position="50"/>
        <end position="57"/>
    </location>
    <ligand>
        <name>ATP</name>
        <dbReference type="ChEBI" id="CHEBI:30616"/>
    </ligand>
</feature>
<reference key="1">
    <citation type="journal article" date="2005" name="Nucleic Acids Res.">
        <title>Genome dynamics and diversity of Shigella species, the etiologic agents of bacillary dysentery.</title>
        <authorList>
            <person name="Yang F."/>
            <person name="Yang J."/>
            <person name="Zhang X."/>
            <person name="Chen L."/>
            <person name="Jiang Y."/>
            <person name="Yan Y."/>
            <person name="Tang X."/>
            <person name="Wang J."/>
            <person name="Xiong Z."/>
            <person name="Dong J."/>
            <person name="Xue Y."/>
            <person name="Zhu Y."/>
            <person name="Xu X."/>
            <person name="Sun L."/>
            <person name="Chen S."/>
            <person name="Nie H."/>
            <person name="Peng J."/>
            <person name="Xu J."/>
            <person name="Wang Y."/>
            <person name="Yuan Z."/>
            <person name="Wen Y."/>
            <person name="Yao Z."/>
            <person name="Shen Y."/>
            <person name="Qiang B."/>
            <person name="Hou Y."/>
            <person name="Yu J."/>
            <person name="Jin Q."/>
        </authorList>
    </citation>
    <scope>NUCLEOTIDE SEQUENCE [LARGE SCALE GENOMIC DNA]</scope>
    <source>
        <strain>Sd197</strain>
    </source>
</reference>
<protein>
    <recommendedName>
        <fullName evidence="1">Spermidine/putrescine import ATP-binding protein PotA</fullName>
        <ecNumber evidence="1">7.6.2.11</ecNumber>
    </recommendedName>
</protein>
<accession>Q32EY4</accession>
<proteinExistence type="inferred from homology"/>
<gene>
    <name evidence="1" type="primary">potA</name>
    <name type="ordered locus">SDY_2026</name>
</gene>